<organism>
    <name type="scientific">Homo sapiens</name>
    <name type="common">Human</name>
    <dbReference type="NCBI Taxonomy" id="9606"/>
    <lineage>
        <taxon>Eukaryota</taxon>
        <taxon>Metazoa</taxon>
        <taxon>Chordata</taxon>
        <taxon>Craniata</taxon>
        <taxon>Vertebrata</taxon>
        <taxon>Euteleostomi</taxon>
        <taxon>Mammalia</taxon>
        <taxon>Eutheria</taxon>
        <taxon>Euarchontoglires</taxon>
        <taxon>Primates</taxon>
        <taxon>Haplorrhini</taxon>
        <taxon>Catarrhini</taxon>
        <taxon>Hominidae</taxon>
        <taxon>Homo</taxon>
    </lineage>
</organism>
<feature type="chain" id="PRO_0000326082" description="Importin subunit alpha-8">
    <location>
        <begin position="1"/>
        <end position="516"/>
    </location>
</feature>
<feature type="domain" description="IBB" evidence="1">
    <location>
        <begin position="1"/>
        <end position="57"/>
    </location>
</feature>
<feature type="repeat" description="ARM 1">
    <location>
        <begin position="103"/>
        <end position="143"/>
    </location>
</feature>
<feature type="repeat" description="ARM 2">
    <location>
        <begin position="146"/>
        <end position="185"/>
    </location>
</feature>
<feature type="repeat" description="ARM 3">
    <location>
        <begin position="188"/>
        <end position="228"/>
    </location>
</feature>
<feature type="repeat" description="ARM 4">
    <location>
        <begin position="231"/>
        <end position="270"/>
    </location>
</feature>
<feature type="repeat" description="ARM 5">
    <location>
        <begin position="273"/>
        <end position="312"/>
    </location>
</feature>
<feature type="repeat" description="ARM 6">
    <location>
        <begin position="315"/>
        <end position="354"/>
    </location>
</feature>
<feature type="repeat" description="ARM 7">
    <location>
        <begin position="357"/>
        <end position="396"/>
    </location>
</feature>
<feature type="repeat" description="ARM 8">
    <location>
        <begin position="400"/>
        <end position="439"/>
    </location>
</feature>
<feature type="sequence variant" id="VAR_088429" description="In OZEMA17; uncertain significance; decreased function in protein import into nucleus; decreased interaction with RSL1D1." evidence="3">
    <original>V</original>
    <variation>M</variation>
    <location>
        <position position="152"/>
    </location>
</feature>
<feature type="sequence variant" id="VAR_088430" description="In OZEMA17; uncertain significance; decreased function in protein import into nucleus; decreased interaction with RSL1D1." evidence="3">
    <original>Q</original>
    <variation>K</variation>
    <location>
        <position position="175"/>
    </location>
</feature>
<feature type="sequence variant" id="VAR_088431" description="In OZEMA17; uncertain significance; decreased function in protein import into nucleus; decreased interaction with RSL1D1." evidence="3">
    <original>L</original>
    <variation>F</variation>
    <location>
        <position position="203"/>
    </location>
</feature>
<feature type="sequence variant" id="VAR_088432" description="In OZEMA17; uncertain significance; decreased function in protein import into nucleus; decreased interaction with RSL1D1." evidence="3">
    <original>P</original>
    <variation>L</variation>
    <location>
        <position position="212"/>
    </location>
</feature>
<dbReference type="EMBL" id="EU126604">
    <property type="protein sequence ID" value="ABW96272.1"/>
    <property type="molecule type" value="mRNA"/>
</dbReference>
<dbReference type="EMBL" id="CH236956">
    <property type="protein sequence ID" value="EAL23884.1"/>
    <property type="status" value="ALT_INIT"/>
    <property type="molecule type" value="Genomic_DNA"/>
</dbReference>
<dbReference type="CCDS" id="CCDS47651.1"/>
<dbReference type="RefSeq" id="NP_001139187.1">
    <property type="nucleotide sequence ID" value="NM_001145715.3"/>
</dbReference>
<dbReference type="SMR" id="A9QM74"/>
<dbReference type="BioGRID" id="135514">
    <property type="interactions" value="8"/>
</dbReference>
<dbReference type="ComplexPortal" id="CPX-1066">
    <property type="entry name" value="Importin complex, KPNA7 variant"/>
</dbReference>
<dbReference type="FunCoup" id="A9QM74">
    <property type="interactions" value="139"/>
</dbReference>
<dbReference type="IntAct" id="A9QM74">
    <property type="interactions" value="2"/>
</dbReference>
<dbReference type="STRING" id="9606.ENSP00000330878"/>
<dbReference type="GlyGen" id="A9QM74">
    <property type="glycosylation" value="1 site, 1 O-linked glycan (1 site)"/>
</dbReference>
<dbReference type="iPTMnet" id="A9QM74"/>
<dbReference type="PhosphoSitePlus" id="A9QM74"/>
<dbReference type="BioMuta" id="KPNA7"/>
<dbReference type="jPOST" id="A9QM74"/>
<dbReference type="MassIVE" id="A9QM74"/>
<dbReference type="PaxDb" id="9606-ENSP00000330878"/>
<dbReference type="PeptideAtlas" id="A9QM74"/>
<dbReference type="ProteomicsDB" id="2499"/>
<dbReference type="Antibodypedia" id="30296">
    <property type="antibodies" value="43 antibodies from 20 providers"/>
</dbReference>
<dbReference type="DNASU" id="402569"/>
<dbReference type="Ensembl" id="ENST00000327442.7">
    <property type="protein sequence ID" value="ENSP00000330878.6"/>
    <property type="gene ID" value="ENSG00000185467.8"/>
</dbReference>
<dbReference type="Ensembl" id="ENST00000640158.1">
    <property type="protein sequence ID" value="ENSP00000491331.1"/>
    <property type="gene ID" value="ENSG00000284068.1"/>
</dbReference>
<dbReference type="Ensembl" id="ENST00000681060.1">
    <property type="protein sequence ID" value="ENSP00000506489.1"/>
    <property type="gene ID" value="ENSG00000185467.8"/>
</dbReference>
<dbReference type="GeneID" id="402569"/>
<dbReference type="KEGG" id="hsa:402569"/>
<dbReference type="MANE-Select" id="ENST00000327442.7">
    <property type="protein sequence ID" value="ENSP00000330878.6"/>
    <property type="RefSeq nucleotide sequence ID" value="NM_001145715.3"/>
    <property type="RefSeq protein sequence ID" value="NP_001139187.1"/>
</dbReference>
<dbReference type="UCSC" id="uc010lft.3">
    <property type="organism name" value="human"/>
</dbReference>
<dbReference type="AGR" id="HGNC:21839"/>
<dbReference type="CTD" id="402569"/>
<dbReference type="DisGeNET" id="402569"/>
<dbReference type="GeneCards" id="KPNA7"/>
<dbReference type="HGNC" id="HGNC:21839">
    <property type="gene designation" value="KPNA7"/>
</dbReference>
<dbReference type="HPA" id="ENSG00000185467">
    <property type="expression patterns" value="Group enriched (ovary, stomach)"/>
</dbReference>
<dbReference type="MalaCards" id="KPNA7"/>
<dbReference type="MIM" id="614107">
    <property type="type" value="gene"/>
</dbReference>
<dbReference type="MIM" id="620319">
    <property type="type" value="phenotype"/>
</dbReference>
<dbReference type="neXtProt" id="NX_A9QM74"/>
<dbReference type="OpenTargets" id="ENSG00000185467"/>
<dbReference type="Orphanet" id="401959">
    <property type="disease" value="Partial corpus callosum agenesis-cerebellar vermis hypoplasia with posterior fossa cysts syndrome"/>
</dbReference>
<dbReference type="PharmGKB" id="PA164722048"/>
<dbReference type="VEuPathDB" id="HostDB:ENSG00000185467"/>
<dbReference type="eggNOG" id="KOG0166">
    <property type="taxonomic scope" value="Eukaryota"/>
</dbReference>
<dbReference type="GeneTree" id="ENSGT01050000244891"/>
<dbReference type="HOGENOM" id="CLU_018084_6_0_1"/>
<dbReference type="InParanoid" id="A9QM74"/>
<dbReference type="OMA" id="HENRQIG"/>
<dbReference type="OrthoDB" id="29145at2759"/>
<dbReference type="PAN-GO" id="A9QM74">
    <property type="GO annotations" value="5 GO annotations based on evolutionary models"/>
</dbReference>
<dbReference type="PhylomeDB" id="A9QM74"/>
<dbReference type="TreeFam" id="TF101178"/>
<dbReference type="PathwayCommons" id="A9QM74"/>
<dbReference type="Reactome" id="R-HSA-1169408">
    <property type="pathway name" value="ISG15 antiviral mechanism"/>
</dbReference>
<dbReference type="Reactome" id="R-HSA-168276">
    <property type="pathway name" value="NS1 Mediated Effects on Host Pathways"/>
</dbReference>
<dbReference type="SignaLink" id="A9QM74"/>
<dbReference type="BioGRID-ORCS" id="402569">
    <property type="hits" value="15 hits in 1141 CRISPR screens"/>
</dbReference>
<dbReference type="CD-CODE" id="DEE660B4">
    <property type="entry name" value="Stress granule"/>
</dbReference>
<dbReference type="ChiTaRS" id="KPNA7">
    <property type="organism name" value="human"/>
</dbReference>
<dbReference type="GenomeRNAi" id="402569"/>
<dbReference type="Pharos" id="A9QM74">
    <property type="development level" value="Tbio"/>
</dbReference>
<dbReference type="PRO" id="PR:A9QM74"/>
<dbReference type="Proteomes" id="UP000005640">
    <property type="component" value="Chromosome 7"/>
</dbReference>
<dbReference type="RNAct" id="A9QM74">
    <property type="molecule type" value="protein"/>
</dbReference>
<dbReference type="Bgee" id="ENSG00000185467">
    <property type="expression patterns" value="Expressed in male germ line stem cell (sensu Vertebrata) in testis and 39 other cell types or tissues"/>
</dbReference>
<dbReference type="GO" id="GO:0005829">
    <property type="term" value="C:cytosol"/>
    <property type="evidence" value="ECO:0000304"/>
    <property type="project" value="Reactome"/>
</dbReference>
<dbReference type="GO" id="GO:0001674">
    <property type="term" value="C:female germ cell nucleus"/>
    <property type="evidence" value="ECO:0007669"/>
    <property type="project" value="Ensembl"/>
</dbReference>
<dbReference type="GO" id="GO:0042564">
    <property type="term" value="C:NLS-dependent protein nuclear import complex"/>
    <property type="evidence" value="ECO:0000353"/>
    <property type="project" value="ComplexPortal"/>
</dbReference>
<dbReference type="GO" id="GO:0005654">
    <property type="term" value="C:nucleoplasm"/>
    <property type="evidence" value="ECO:0000304"/>
    <property type="project" value="Reactome"/>
</dbReference>
<dbReference type="GO" id="GO:0005634">
    <property type="term" value="C:nucleus"/>
    <property type="evidence" value="ECO:0000314"/>
    <property type="project" value="UniProtKB"/>
</dbReference>
<dbReference type="GO" id="GO:0005819">
    <property type="term" value="C:spindle"/>
    <property type="evidence" value="ECO:0007669"/>
    <property type="project" value="Ensembl"/>
</dbReference>
<dbReference type="GO" id="GO:0061608">
    <property type="term" value="F:nuclear import signal receptor activity"/>
    <property type="evidence" value="ECO:0000318"/>
    <property type="project" value="GO_Central"/>
</dbReference>
<dbReference type="GO" id="GO:0008139">
    <property type="term" value="F:nuclear localization sequence binding"/>
    <property type="evidence" value="ECO:0000318"/>
    <property type="project" value="GO_Central"/>
</dbReference>
<dbReference type="GO" id="GO:0001824">
    <property type="term" value="P:blastocyst development"/>
    <property type="evidence" value="ECO:0007669"/>
    <property type="project" value="Ensembl"/>
</dbReference>
<dbReference type="GO" id="GO:0040029">
    <property type="term" value="P:epigenetic regulation of gene expression"/>
    <property type="evidence" value="ECO:0007669"/>
    <property type="project" value="Ensembl"/>
</dbReference>
<dbReference type="GO" id="GO:0010629">
    <property type="term" value="P:negative regulation of gene expression"/>
    <property type="evidence" value="ECO:0007669"/>
    <property type="project" value="Ensembl"/>
</dbReference>
<dbReference type="GO" id="GO:0006607">
    <property type="term" value="P:NLS-bearing protein import into nucleus"/>
    <property type="evidence" value="ECO:0000318"/>
    <property type="project" value="GO_Central"/>
</dbReference>
<dbReference type="GO" id="GO:0010628">
    <property type="term" value="P:positive regulation of gene expression"/>
    <property type="evidence" value="ECO:0007669"/>
    <property type="project" value="Ensembl"/>
</dbReference>
<dbReference type="GO" id="GO:0006606">
    <property type="term" value="P:protein import into nucleus"/>
    <property type="evidence" value="ECO:0000250"/>
    <property type="project" value="ComplexPortal"/>
</dbReference>
<dbReference type="FunFam" id="1.20.5.690:FF:000008">
    <property type="entry name" value="Importin subunit alpha"/>
    <property type="match status" value="1"/>
</dbReference>
<dbReference type="FunFam" id="1.25.10.10:FF:000009">
    <property type="entry name" value="Importin subunit alpha"/>
    <property type="match status" value="1"/>
</dbReference>
<dbReference type="Gene3D" id="1.20.5.690">
    <property type="entry name" value="Importin-alpha, importin-beta-binding domain"/>
    <property type="match status" value="1"/>
</dbReference>
<dbReference type="Gene3D" id="1.25.10.10">
    <property type="entry name" value="Leucine-rich Repeat Variant"/>
    <property type="match status" value="1"/>
</dbReference>
<dbReference type="InterPro" id="IPR011989">
    <property type="entry name" value="ARM-like"/>
</dbReference>
<dbReference type="InterPro" id="IPR016024">
    <property type="entry name" value="ARM-type_fold"/>
</dbReference>
<dbReference type="InterPro" id="IPR032413">
    <property type="entry name" value="Arm_3"/>
</dbReference>
<dbReference type="InterPro" id="IPR000225">
    <property type="entry name" value="Armadillo"/>
</dbReference>
<dbReference type="InterPro" id="IPR002652">
    <property type="entry name" value="Importin-a_IBB"/>
</dbReference>
<dbReference type="InterPro" id="IPR036975">
    <property type="entry name" value="Importin-a_IBB_sf"/>
</dbReference>
<dbReference type="InterPro" id="IPR024931">
    <property type="entry name" value="Importin_alpha"/>
</dbReference>
<dbReference type="PANTHER" id="PTHR23316">
    <property type="entry name" value="IMPORTIN ALPHA"/>
    <property type="match status" value="1"/>
</dbReference>
<dbReference type="Pfam" id="PF00514">
    <property type="entry name" value="Arm"/>
    <property type="match status" value="7"/>
</dbReference>
<dbReference type="Pfam" id="PF16186">
    <property type="entry name" value="Arm_3"/>
    <property type="match status" value="1"/>
</dbReference>
<dbReference type="Pfam" id="PF01749">
    <property type="entry name" value="IBB"/>
    <property type="match status" value="1"/>
</dbReference>
<dbReference type="PIRSF" id="PIRSF005673">
    <property type="entry name" value="Importin_alpha"/>
    <property type="match status" value="1"/>
</dbReference>
<dbReference type="SMART" id="SM00185">
    <property type="entry name" value="ARM"/>
    <property type="match status" value="8"/>
</dbReference>
<dbReference type="SUPFAM" id="SSF48371">
    <property type="entry name" value="ARM repeat"/>
    <property type="match status" value="1"/>
</dbReference>
<dbReference type="PROSITE" id="PS50176">
    <property type="entry name" value="ARM_REPEAT"/>
    <property type="match status" value="5"/>
</dbReference>
<dbReference type="PROSITE" id="PS51214">
    <property type="entry name" value="IBB"/>
    <property type="match status" value="1"/>
</dbReference>
<keyword id="KW-0539">Nucleus</keyword>
<keyword id="KW-0653">Protein transport</keyword>
<keyword id="KW-1267">Proteomics identification</keyword>
<keyword id="KW-1185">Reference proteome</keyword>
<keyword id="KW-0677">Repeat</keyword>
<keyword id="KW-0813">Transport</keyword>
<gene>
    <name type="primary">KPNA7</name>
</gene>
<reference key="1">
    <citation type="journal article" date="2010" name="BMC Cell Biol.">
        <title>Karyopherin alpha7 (KPNA7), a divergent member of the importin alpha family of nuclear import receptors.</title>
        <authorList>
            <person name="Kelley J.B."/>
            <person name="Talley A.M."/>
            <person name="Spencer A."/>
            <person name="Gioeli D."/>
            <person name="Paschal B.M."/>
        </authorList>
    </citation>
    <scope>NUCLEOTIDE SEQUENCE [MRNA]</scope>
    <scope>SUBCELLULAR LOCATION</scope>
    <scope>INTERACTION WITH KPNB1 AND RB1</scope>
    <source>
        <tissue>Prostatic adenocarcinoma</tissue>
    </source>
</reference>
<reference key="2">
    <citation type="journal article" date="2003" name="Science">
        <title>Human chromosome 7: DNA sequence and biology.</title>
        <authorList>
            <person name="Scherer S.W."/>
            <person name="Cheung J."/>
            <person name="MacDonald J.R."/>
            <person name="Osborne L.R."/>
            <person name="Nakabayashi K."/>
            <person name="Herbrick J.-A."/>
            <person name="Carson A.R."/>
            <person name="Parker-Katiraee L."/>
            <person name="Skaug J."/>
            <person name="Khaja R."/>
            <person name="Zhang J."/>
            <person name="Hudek A.K."/>
            <person name="Li M."/>
            <person name="Haddad M."/>
            <person name="Duggan G.E."/>
            <person name="Fernandez B.A."/>
            <person name="Kanematsu E."/>
            <person name="Gentles S."/>
            <person name="Christopoulos C.C."/>
            <person name="Choufani S."/>
            <person name="Kwasnicka D."/>
            <person name="Zheng X.H."/>
            <person name="Lai Z."/>
            <person name="Nusskern D.R."/>
            <person name="Zhang Q."/>
            <person name="Gu Z."/>
            <person name="Lu F."/>
            <person name="Zeesman S."/>
            <person name="Nowaczyk M.J."/>
            <person name="Teshima I."/>
            <person name="Chitayat D."/>
            <person name="Shuman C."/>
            <person name="Weksberg R."/>
            <person name="Zackai E.H."/>
            <person name="Grebe T.A."/>
            <person name="Cox S.R."/>
            <person name="Kirkpatrick S.J."/>
            <person name="Rahman N."/>
            <person name="Friedman J.M."/>
            <person name="Heng H.H.Q."/>
            <person name="Pelicci P.G."/>
            <person name="Lo-Coco F."/>
            <person name="Belloni E."/>
            <person name="Shaffer L.G."/>
            <person name="Pober B."/>
            <person name="Morton C.C."/>
            <person name="Gusella J.F."/>
            <person name="Bruns G.A.P."/>
            <person name="Korf B.R."/>
            <person name="Quade B.J."/>
            <person name="Ligon A.H."/>
            <person name="Ferguson H."/>
            <person name="Higgins A.W."/>
            <person name="Leach N.T."/>
            <person name="Herrick S.R."/>
            <person name="Lemyre E."/>
            <person name="Farra C.G."/>
            <person name="Kim H.-G."/>
            <person name="Summers A.M."/>
            <person name="Gripp K.W."/>
            <person name="Roberts W."/>
            <person name="Szatmari P."/>
            <person name="Winsor E.J.T."/>
            <person name="Grzeschik K.-H."/>
            <person name="Teebi A."/>
            <person name="Minassian B.A."/>
            <person name="Kere J."/>
            <person name="Armengol L."/>
            <person name="Pujana M.A."/>
            <person name="Estivill X."/>
            <person name="Wilson M.D."/>
            <person name="Koop B.F."/>
            <person name="Tosi S."/>
            <person name="Moore G.E."/>
            <person name="Boright A.P."/>
            <person name="Zlotorynski E."/>
            <person name="Kerem B."/>
            <person name="Kroisel P.M."/>
            <person name="Petek E."/>
            <person name="Oscier D.G."/>
            <person name="Mould S.J."/>
            <person name="Doehner H."/>
            <person name="Doehner K."/>
            <person name="Rommens J.M."/>
            <person name="Vincent J.B."/>
            <person name="Venter J.C."/>
            <person name="Li P.W."/>
            <person name="Mural R.J."/>
            <person name="Adams M.D."/>
            <person name="Tsui L.-C."/>
        </authorList>
    </citation>
    <scope>NUCLEOTIDE SEQUENCE [LARGE SCALE GENOMIC DNA]</scope>
</reference>
<reference key="3">
    <citation type="journal article" date="2023" name="J. Clin. Invest.">
        <title>Karyopherin alpha deficiency contributes to human preimplantation embryo arrest.</title>
        <authorList>
            <person name="Wang W."/>
            <person name="Miyamoto Y."/>
            <person name="Chen B."/>
            <person name="Shi J."/>
            <person name="Diao F."/>
            <person name="Zheng W."/>
            <person name="Li Q."/>
            <person name="Yu L."/>
            <person name="Li L."/>
            <person name="Xu Y."/>
            <person name="Wu L."/>
            <person name="Mao X."/>
            <person name="Fu J."/>
            <person name="Li B."/>
            <person name="Yan Z."/>
            <person name="Shi R."/>
            <person name="Xue X."/>
            <person name="Mu J."/>
            <person name="Zhang Z."/>
            <person name="Wu T."/>
            <person name="Zhao L."/>
            <person name="Wang W."/>
            <person name="Zhou Z."/>
            <person name="Dong J."/>
            <person name="Li Q."/>
            <person name="Jin L."/>
            <person name="He L."/>
            <person name="Sun X."/>
            <person name="Lin G."/>
            <person name="Kuang Y."/>
            <person name="Wang L."/>
            <person name="Sang Q."/>
        </authorList>
    </citation>
    <scope>VARIANTS OZEMA17 MET-152; LYS-175; PHE-203 AND LEU-212</scope>
    <scope>INVOLVEMENT IN OZEMA17</scope>
    <scope>CHARACTERIZATION OF VARIANTS OZEMA17 MET-152; LYS-175; PHE-203 AND LEU-212</scope>
    <scope>INTERACTION WITH RSL1D1</scope>
    <scope>FUNCTION</scope>
    <scope>SUBCELLULAR LOCATION</scope>
</reference>
<comment type="function">
    <text evidence="3">Functions in nuclear protein import.</text>
</comment>
<comment type="subunit">
    <text evidence="3">Binds very efficiently to importin subunit beta-1/KPNB1 via the IBB domain; this complex dissociates in the presence of RAN-GTP. Shows a limited binding to the RB1 nuclear localization signal (NLS), but not to the SV40, nor NPM1 NLSs. Interacts with RSL1D1 (PubMed:36647821).</text>
</comment>
<comment type="interaction">
    <interactant intactId="EBI-13942676">
        <id>A9QM74</id>
    </interactant>
    <interactant intactId="EBI-286758">
        <id>Q14974</id>
        <label>KPNB1</label>
    </interactant>
    <organismsDiffer>false</organismsDiffer>
    <experiments>2</experiments>
</comment>
<comment type="subcellular location">
    <subcellularLocation>
        <location evidence="2 3">Nucleus</location>
    </subcellularLocation>
</comment>
<comment type="disease" evidence="3">
    <disease id="DI-06643">
        <name>Oocyte/zygote/embryo maturation arrest 17</name>
        <acronym>OZEMA17</acronym>
        <description>A rare cause of female primary infertility. In affected women, ovulation and fertilization proceed normally but embryos are arrested at early stages of development or cannot establish pregnancy after implantation. Inheritance is autosomal recessive.</description>
        <dbReference type="MIM" id="620319"/>
    </disease>
    <text>The disease is caused by variants affecting the gene represented in this entry.</text>
</comment>
<comment type="similarity">
    <text evidence="4">Belongs to the importin alpha family.</text>
</comment>
<comment type="sequence caution" evidence="4">
    <conflict type="erroneous initiation">
        <sequence resource="EMBL-CDS" id="EAL23884"/>
    </conflict>
    <text>Extended N-terminus.</text>
</comment>
<name>IMA8_HUMAN</name>
<sequence>MPTLDAPEERRRKFKYRGKDVSLRRQQRMAVSLELRKAKKDEQTLKRRNITSFCPDTPSEKTAKGVAVSLTLGEIIKGVNSSDPVLCFQATQTARKMLSQEKNPPLKLVIEAGLIPRMVEFLKSSLYPCLQFEAAWALTNIASGTSEQTRAVVEGGAIQPLIELLSSSNVAVCEQAVWALGNIAGDGPEFRDNVITSNAIPHLLALISPTLPITFLRNITWTLSNLCRNKNPYPCDTAVKQILPALLHLLQHQDSEVLSDACWALSYLTDGSNKRIGQVVNTGVLPRLVVLMTSSELNVLTPSLRTVGNIVTGTDEQTQMAIDAGMLNVLPQLLQHNKPSIQKEAAWALSNVAAGPCHHIQQLLAYDVLPPLVALLKNGEFKVQKEAVWMVANFATGATMDQLIQLVHSGVLEPLVNLLTAPDVKIVLIILDVISCILQAAEKRSEKENLCLLIEELGGIDRIEALQLHENRQIGQSALNIIEKHFGEEEDESQTLLSQVIDQDYEFIDYECLAKK</sequence>
<protein>
    <recommendedName>
        <fullName>Importin subunit alpha-8</fullName>
    </recommendedName>
    <alternativeName>
        <fullName>Karyopherin subunit alpha-7</fullName>
    </alternativeName>
</protein>
<proteinExistence type="evidence at protein level"/>
<evidence type="ECO:0000255" key="1">
    <source>
        <dbReference type="PROSITE-ProRule" id="PRU00561"/>
    </source>
</evidence>
<evidence type="ECO:0000269" key="2">
    <source>
    </source>
</evidence>
<evidence type="ECO:0000269" key="3">
    <source>
    </source>
</evidence>
<evidence type="ECO:0000305" key="4"/>
<accession>A9QM74</accession>
<accession>A4D277</accession>